<feature type="chain" id="PRO_0000083791" description="3-isopropylmalate dehydrogenase">
    <location>
        <begin position="1"/>
        <end position="363"/>
    </location>
</feature>
<feature type="binding site" evidence="1">
    <location>
        <begin position="78"/>
        <end position="91"/>
    </location>
    <ligand>
        <name>NAD(+)</name>
        <dbReference type="ChEBI" id="CHEBI:57540"/>
    </ligand>
</feature>
<feature type="binding site" evidence="1">
    <location>
        <position position="99"/>
    </location>
    <ligand>
        <name>substrate</name>
    </ligand>
</feature>
<feature type="binding site" evidence="1">
    <location>
        <position position="109"/>
    </location>
    <ligand>
        <name>substrate</name>
    </ligand>
</feature>
<feature type="binding site" evidence="1">
    <location>
        <position position="138"/>
    </location>
    <ligand>
        <name>substrate</name>
    </ligand>
</feature>
<feature type="binding site" evidence="1">
    <location>
        <position position="227"/>
    </location>
    <ligand>
        <name>Mg(2+)</name>
        <dbReference type="ChEBI" id="CHEBI:18420"/>
    </ligand>
</feature>
<feature type="binding site" evidence="1">
    <location>
        <position position="227"/>
    </location>
    <ligand>
        <name>substrate</name>
    </ligand>
</feature>
<feature type="binding site" evidence="1">
    <location>
        <position position="251"/>
    </location>
    <ligand>
        <name>Mg(2+)</name>
        <dbReference type="ChEBI" id="CHEBI:18420"/>
    </ligand>
</feature>
<feature type="binding site" evidence="1">
    <location>
        <position position="255"/>
    </location>
    <ligand>
        <name>Mg(2+)</name>
        <dbReference type="ChEBI" id="CHEBI:18420"/>
    </ligand>
</feature>
<feature type="binding site" evidence="1">
    <location>
        <begin position="285"/>
        <end position="297"/>
    </location>
    <ligand>
        <name>NAD(+)</name>
        <dbReference type="ChEBI" id="CHEBI:57540"/>
    </ligand>
</feature>
<feature type="site" description="Important for catalysis" evidence="1">
    <location>
        <position position="145"/>
    </location>
</feature>
<feature type="site" description="Important for catalysis" evidence="1">
    <location>
        <position position="195"/>
    </location>
</feature>
<keyword id="KW-0028">Amino-acid biosynthesis</keyword>
<keyword id="KW-0100">Branched-chain amino acid biosynthesis</keyword>
<keyword id="KW-0963">Cytoplasm</keyword>
<keyword id="KW-0432">Leucine biosynthesis</keyword>
<keyword id="KW-0460">Magnesium</keyword>
<keyword id="KW-0464">Manganese</keyword>
<keyword id="KW-0479">Metal-binding</keyword>
<keyword id="KW-0520">NAD</keyword>
<keyword id="KW-0560">Oxidoreductase</keyword>
<keyword id="KW-1185">Reference proteome</keyword>
<accession>Q8ZIG9</accession>
<accession>Q0WJD4</accession>
<organism>
    <name type="scientific">Yersinia pestis</name>
    <dbReference type="NCBI Taxonomy" id="632"/>
    <lineage>
        <taxon>Bacteria</taxon>
        <taxon>Pseudomonadati</taxon>
        <taxon>Pseudomonadota</taxon>
        <taxon>Gammaproteobacteria</taxon>
        <taxon>Enterobacterales</taxon>
        <taxon>Yersiniaceae</taxon>
        <taxon>Yersinia</taxon>
    </lineage>
</organism>
<sequence length="363" mass="39267">MTKTYHIAVLPGDGIGPEVMAQASKVLDAVRQRFGLKISTSVYDVGGAAIDRHGSPLPAATVAGCEQADAILFGSVGGPKWEHLPPAEQPERGALLPLRKHFKLFSNLRPARLYQGLEDFCPLRSDIAARGFDILCVRELTGGIYFGQPKGREGQGMHERAFDTEVYHRFEIERIARIAFESARKRRSKVTSIDKANVLQSSILWREVVNGIAADYPDVALSHMYIDNATMQLIKDPSQFDVLLCSNLFGDILSDECAMITGSMGMLPSASLNEQGFGLYEPAGGSAPDIAGKNIANPIAQILSLTLLLRFSLGKDDAADAIERAINQALEQGYRTADLAGDGHAIGTHEMGDIIAKFVVEGV</sequence>
<protein>
    <recommendedName>
        <fullName evidence="1">3-isopropylmalate dehydrogenase</fullName>
        <ecNumber evidence="1">1.1.1.85</ecNumber>
    </recommendedName>
    <alternativeName>
        <fullName evidence="1">3-IPM-DH</fullName>
    </alternativeName>
    <alternativeName>
        <fullName evidence="1">Beta-IPM dehydrogenase</fullName>
        <shortName evidence="1">IMDH</shortName>
    </alternativeName>
</protein>
<name>LEU3_YERPE</name>
<comment type="function">
    <text evidence="1">Catalyzes the oxidation of 3-carboxy-2-hydroxy-4-methylpentanoate (3-isopropylmalate) to 3-carboxy-4-methyl-2-oxopentanoate. The product decarboxylates to 4-methyl-2 oxopentanoate.</text>
</comment>
<comment type="catalytic activity">
    <reaction evidence="1">
        <text>(2R,3S)-3-isopropylmalate + NAD(+) = 4-methyl-2-oxopentanoate + CO2 + NADH</text>
        <dbReference type="Rhea" id="RHEA:32271"/>
        <dbReference type="ChEBI" id="CHEBI:16526"/>
        <dbReference type="ChEBI" id="CHEBI:17865"/>
        <dbReference type="ChEBI" id="CHEBI:35121"/>
        <dbReference type="ChEBI" id="CHEBI:57540"/>
        <dbReference type="ChEBI" id="CHEBI:57945"/>
        <dbReference type="EC" id="1.1.1.85"/>
    </reaction>
</comment>
<comment type="cofactor">
    <cofactor evidence="1">
        <name>Mg(2+)</name>
        <dbReference type="ChEBI" id="CHEBI:18420"/>
    </cofactor>
    <cofactor evidence="1">
        <name>Mn(2+)</name>
        <dbReference type="ChEBI" id="CHEBI:29035"/>
    </cofactor>
    <text evidence="1">Binds 1 Mg(2+) or Mn(2+) ion per subunit.</text>
</comment>
<comment type="pathway">
    <text evidence="1">Amino-acid biosynthesis; L-leucine biosynthesis; L-leucine from 3-methyl-2-oxobutanoate: step 3/4.</text>
</comment>
<comment type="subunit">
    <text evidence="1">Homodimer.</text>
</comment>
<comment type="subcellular location">
    <subcellularLocation>
        <location evidence="1">Cytoplasm</location>
    </subcellularLocation>
</comment>
<comment type="similarity">
    <text evidence="1">Belongs to the isocitrate and isopropylmalate dehydrogenases family. LeuB type 1 subfamily.</text>
</comment>
<comment type="sequence caution" evidence="2">
    <conflict type="erroneous initiation">
        <sequence resource="EMBL-CDS" id="AAM87194"/>
    </conflict>
</comment>
<comment type="sequence caution" evidence="2">
    <conflict type="erroneous initiation">
        <sequence resource="EMBL-CDS" id="AAS63798"/>
    </conflict>
</comment>
<comment type="sequence caution" evidence="2">
    <conflict type="erroneous initiation">
        <sequence resource="EMBL-CDS" id="CAL19212"/>
    </conflict>
</comment>
<dbReference type="EC" id="1.1.1.85" evidence="1"/>
<dbReference type="EMBL" id="AL590842">
    <property type="protein sequence ID" value="CAL19212.1"/>
    <property type="status" value="ALT_INIT"/>
    <property type="molecule type" value="Genomic_DNA"/>
</dbReference>
<dbReference type="EMBL" id="AE009952">
    <property type="protein sequence ID" value="AAM87194.1"/>
    <property type="status" value="ALT_INIT"/>
    <property type="molecule type" value="Genomic_DNA"/>
</dbReference>
<dbReference type="EMBL" id="AE017042">
    <property type="protein sequence ID" value="AAS63798.1"/>
    <property type="status" value="ALT_INIT"/>
    <property type="molecule type" value="Genomic_DNA"/>
</dbReference>
<dbReference type="PIR" id="AB0066">
    <property type="entry name" value="AB0066"/>
</dbReference>
<dbReference type="RefSeq" id="WP_002210454.1">
    <property type="nucleotide sequence ID" value="NZ_WUCM01000024.1"/>
</dbReference>
<dbReference type="SMR" id="Q8ZIG9"/>
<dbReference type="IntAct" id="Q8ZIG9">
    <property type="interactions" value="4"/>
</dbReference>
<dbReference type="STRING" id="214092.YPO0532"/>
<dbReference type="PaxDb" id="214092-YPO0532"/>
<dbReference type="EnsemblBacteria" id="AAS63798">
    <property type="protein sequence ID" value="AAS63798"/>
    <property type="gene ID" value="YP_3650"/>
</dbReference>
<dbReference type="GeneID" id="57974080"/>
<dbReference type="KEGG" id="ype:YPO0532"/>
<dbReference type="KEGG" id="ypk:y3646"/>
<dbReference type="KEGG" id="ypm:YP_3650"/>
<dbReference type="eggNOG" id="COG0473">
    <property type="taxonomic scope" value="Bacteria"/>
</dbReference>
<dbReference type="HOGENOM" id="CLU_031953_0_3_6"/>
<dbReference type="OMA" id="EYDLGAR"/>
<dbReference type="OrthoDB" id="9767905at2"/>
<dbReference type="UniPathway" id="UPA00048">
    <property type="reaction ID" value="UER00072"/>
</dbReference>
<dbReference type="Proteomes" id="UP000000815">
    <property type="component" value="Chromosome"/>
</dbReference>
<dbReference type="Proteomes" id="UP000001019">
    <property type="component" value="Chromosome"/>
</dbReference>
<dbReference type="Proteomes" id="UP000002490">
    <property type="component" value="Chromosome"/>
</dbReference>
<dbReference type="GO" id="GO:0005829">
    <property type="term" value="C:cytosol"/>
    <property type="evidence" value="ECO:0000318"/>
    <property type="project" value="GO_Central"/>
</dbReference>
<dbReference type="GO" id="GO:0003862">
    <property type="term" value="F:3-isopropylmalate dehydrogenase activity"/>
    <property type="evidence" value="ECO:0000318"/>
    <property type="project" value="GO_Central"/>
</dbReference>
<dbReference type="GO" id="GO:0000287">
    <property type="term" value="F:magnesium ion binding"/>
    <property type="evidence" value="ECO:0007669"/>
    <property type="project" value="InterPro"/>
</dbReference>
<dbReference type="GO" id="GO:0051287">
    <property type="term" value="F:NAD binding"/>
    <property type="evidence" value="ECO:0007669"/>
    <property type="project" value="InterPro"/>
</dbReference>
<dbReference type="GO" id="GO:0009098">
    <property type="term" value="P:L-leucine biosynthetic process"/>
    <property type="evidence" value="ECO:0000318"/>
    <property type="project" value="GO_Central"/>
</dbReference>
<dbReference type="FunFam" id="3.40.718.10:FF:000004">
    <property type="entry name" value="3-isopropylmalate dehydrogenase"/>
    <property type="match status" value="1"/>
</dbReference>
<dbReference type="Gene3D" id="3.40.718.10">
    <property type="entry name" value="Isopropylmalate Dehydrogenase"/>
    <property type="match status" value="1"/>
</dbReference>
<dbReference type="HAMAP" id="MF_01033">
    <property type="entry name" value="LeuB_type1"/>
    <property type="match status" value="1"/>
</dbReference>
<dbReference type="InterPro" id="IPR019818">
    <property type="entry name" value="IsoCit/isopropylmalate_DH_CS"/>
</dbReference>
<dbReference type="InterPro" id="IPR024084">
    <property type="entry name" value="IsoPropMal-DH-like_dom"/>
</dbReference>
<dbReference type="InterPro" id="IPR004429">
    <property type="entry name" value="Isopropylmalate_DH"/>
</dbReference>
<dbReference type="NCBIfam" id="TIGR00169">
    <property type="entry name" value="leuB"/>
    <property type="match status" value="1"/>
</dbReference>
<dbReference type="PANTHER" id="PTHR42979">
    <property type="entry name" value="3-ISOPROPYLMALATE DEHYDROGENASE"/>
    <property type="match status" value="1"/>
</dbReference>
<dbReference type="PANTHER" id="PTHR42979:SF1">
    <property type="entry name" value="3-ISOPROPYLMALATE DEHYDROGENASE"/>
    <property type="match status" value="1"/>
</dbReference>
<dbReference type="Pfam" id="PF00180">
    <property type="entry name" value="Iso_dh"/>
    <property type="match status" value="1"/>
</dbReference>
<dbReference type="SMART" id="SM01329">
    <property type="entry name" value="Iso_dh"/>
    <property type="match status" value="1"/>
</dbReference>
<dbReference type="SUPFAM" id="SSF53659">
    <property type="entry name" value="Isocitrate/Isopropylmalate dehydrogenase-like"/>
    <property type="match status" value="1"/>
</dbReference>
<dbReference type="PROSITE" id="PS00470">
    <property type="entry name" value="IDH_IMDH"/>
    <property type="match status" value="1"/>
</dbReference>
<reference key="1">
    <citation type="journal article" date="2001" name="Nature">
        <title>Genome sequence of Yersinia pestis, the causative agent of plague.</title>
        <authorList>
            <person name="Parkhill J."/>
            <person name="Wren B.W."/>
            <person name="Thomson N.R."/>
            <person name="Titball R.W."/>
            <person name="Holden M.T.G."/>
            <person name="Prentice M.B."/>
            <person name="Sebaihia M."/>
            <person name="James K.D."/>
            <person name="Churcher C.M."/>
            <person name="Mungall K.L."/>
            <person name="Baker S."/>
            <person name="Basham D."/>
            <person name="Bentley S.D."/>
            <person name="Brooks K."/>
            <person name="Cerdeno-Tarraga A.-M."/>
            <person name="Chillingworth T."/>
            <person name="Cronin A."/>
            <person name="Davies R.M."/>
            <person name="Davis P."/>
            <person name="Dougan G."/>
            <person name="Feltwell T."/>
            <person name="Hamlin N."/>
            <person name="Holroyd S."/>
            <person name="Jagels K."/>
            <person name="Karlyshev A.V."/>
            <person name="Leather S."/>
            <person name="Moule S."/>
            <person name="Oyston P.C.F."/>
            <person name="Quail M.A."/>
            <person name="Rutherford K.M."/>
            <person name="Simmonds M."/>
            <person name="Skelton J."/>
            <person name="Stevens K."/>
            <person name="Whitehead S."/>
            <person name="Barrell B.G."/>
        </authorList>
    </citation>
    <scope>NUCLEOTIDE SEQUENCE [LARGE SCALE GENOMIC DNA]</scope>
    <source>
        <strain>CO-92 / Biovar Orientalis</strain>
    </source>
</reference>
<reference key="2">
    <citation type="journal article" date="2002" name="J. Bacteriol.">
        <title>Genome sequence of Yersinia pestis KIM.</title>
        <authorList>
            <person name="Deng W."/>
            <person name="Burland V."/>
            <person name="Plunkett G. III"/>
            <person name="Boutin A."/>
            <person name="Mayhew G.F."/>
            <person name="Liss P."/>
            <person name="Perna N.T."/>
            <person name="Rose D.J."/>
            <person name="Mau B."/>
            <person name="Zhou S."/>
            <person name="Schwartz D.C."/>
            <person name="Fetherston J.D."/>
            <person name="Lindler L.E."/>
            <person name="Brubaker R.R."/>
            <person name="Plano G.V."/>
            <person name="Straley S.C."/>
            <person name="McDonough K.A."/>
            <person name="Nilles M.L."/>
            <person name="Matson J.S."/>
            <person name="Blattner F.R."/>
            <person name="Perry R.D."/>
        </authorList>
    </citation>
    <scope>NUCLEOTIDE SEQUENCE [LARGE SCALE GENOMIC DNA]</scope>
    <source>
        <strain>KIM10+ / Biovar Mediaevalis</strain>
    </source>
</reference>
<reference key="3">
    <citation type="journal article" date="2004" name="DNA Res.">
        <title>Complete genome sequence of Yersinia pestis strain 91001, an isolate avirulent to humans.</title>
        <authorList>
            <person name="Song Y."/>
            <person name="Tong Z."/>
            <person name="Wang J."/>
            <person name="Wang L."/>
            <person name="Guo Z."/>
            <person name="Han Y."/>
            <person name="Zhang J."/>
            <person name="Pei D."/>
            <person name="Zhou D."/>
            <person name="Qin H."/>
            <person name="Pang X."/>
            <person name="Han Y."/>
            <person name="Zhai J."/>
            <person name="Li M."/>
            <person name="Cui B."/>
            <person name="Qi Z."/>
            <person name="Jin L."/>
            <person name="Dai R."/>
            <person name="Chen F."/>
            <person name="Li S."/>
            <person name="Ye C."/>
            <person name="Du Z."/>
            <person name="Lin W."/>
            <person name="Wang J."/>
            <person name="Yu J."/>
            <person name="Yang H."/>
            <person name="Wang J."/>
            <person name="Huang P."/>
            <person name="Yang R."/>
        </authorList>
    </citation>
    <scope>NUCLEOTIDE SEQUENCE [LARGE SCALE GENOMIC DNA]</scope>
    <source>
        <strain>91001 / Biovar Mediaevalis</strain>
    </source>
</reference>
<proteinExistence type="inferred from homology"/>
<evidence type="ECO:0000255" key="1">
    <source>
        <dbReference type="HAMAP-Rule" id="MF_01033"/>
    </source>
</evidence>
<evidence type="ECO:0000305" key="2"/>
<gene>
    <name evidence="1" type="primary">leuB</name>
    <name type="ordered locus">YPO0532</name>
    <name type="ordered locus">y3646</name>
    <name type="ordered locus">YP_3650</name>
</gene>